<accession>A8L4H3</accession>
<organism>
    <name type="scientific">Parafrankia sp. (strain EAN1pec)</name>
    <dbReference type="NCBI Taxonomy" id="298653"/>
    <lineage>
        <taxon>Bacteria</taxon>
        <taxon>Bacillati</taxon>
        <taxon>Actinomycetota</taxon>
        <taxon>Actinomycetes</taxon>
        <taxon>Frankiales</taxon>
        <taxon>Frankiaceae</taxon>
        <taxon>Parafrankia</taxon>
    </lineage>
</organism>
<sequence>MTASATRQRPEADLGTAEWLVCDGCRRMIYGRRFARGGHVCPECGWHARLTATQRIALLLDEGSVEVVDTPVTAADPLQFVDTRPYADRLRSARTSTGLTEAVVVARGRIEGCPVVTAVMDFRFLGGSLGAAVGEAITGACEIALRERTPLLLVTASGGARMQEGALSLMQMAKTAQAIGQLDEAGILTVSLITDPTFGGVAASFATLTDVIVAEPGARLGFAGARVIEQTIRQTLPPGFQTAEFLLEHGVVDLISPRGQLRPTLARLLGVATRRPGTAPVTPGDGHSAGDGRGAGDSRGASHGGDGVVRDPARLADRHPWEAVRLARRLGRPSTLDYIGALVEDWTELHGDRAATDCPAMVAGLGRLDGTPVVVIGTQKGHTATELAARSYGMPSPGGYRKAARVMRLAAKLGLPVITLIDTAGAHPGLEAEQNGQAVAIAENLRLMAGLPVPVVAVVTGEGGSGGALALAVANRVLMCANAIYSVISPEGCAAILWKDPAAGPDAAAALRVDARALLAAGIVDGVVPEPDGGADVDPLAATDALRAALTGALAELAPLDPPTLVTARRARFRRFGTPAPAGGAAPAPVVPAARPPLGAGRTHADLDDARRAS</sequence>
<evidence type="ECO:0000250" key="1"/>
<evidence type="ECO:0000255" key="2">
    <source>
        <dbReference type="PROSITE-ProRule" id="PRU01136"/>
    </source>
</evidence>
<evidence type="ECO:0000255" key="3">
    <source>
        <dbReference type="PROSITE-ProRule" id="PRU01137"/>
    </source>
</evidence>
<evidence type="ECO:0000255" key="4">
    <source>
        <dbReference type="PROSITE-ProRule" id="PRU01138"/>
    </source>
</evidence>
<evidence type="ECO:0000256" key="5">
    <source>
        <dbReference type="SAM" id="MobiDB-lite"/>
    </source>
</evidence>
<evidence type="ECO:0000305" key="6"/>
<reference key="1">
    <citation type="journal article" date="2007" name="Genome Res.">
        <title>Genome characteristics of facultatively symbiotic Frankia sp. strains reflect host range and host plant biogeography.</title>
        <authorList>
            <person name="Normand P."/>
            <person name="Lapierre P."/>
            <person name="Tisa L.S."/>
            <person name="Gogarten J.P."/>
            <person name="Alloisio N."/>
            <person name="Bagnarol E."/>
            <person name="Bassi C.A."/>
            <person name="Berry A.M."/>
            <person name="Bickhart D.M."/>
            <person name="Choisne N."/>
            <person name="Couloux A."/>
            <person name="Cournoyer B."/>
            <person name="Cruveiller S."/>
            <person name="Daubin V."/>
            <person name="Demange N."/>
            <person name="Francino M.P."/>
            <person name="Goltsman E."/>
            <person name="Huang Y."/>
            <person name="Kopp O.R."/>
            <person name="Labarre L."/>
            <person name="Lapidus A."/>
            <person name="Lavire C."/>
            <person name="Marechal J."/>
            <person name="Martinez M."/>
            <person name="Mastronunzio J.E."/>
            <person name="Mullin B.C."/>
            <person name="Niemann J."/>
            <person name="Pujic P."/>
            <person name="Rawnsley T."/>
            <person name="Rouy Z."/>
            <person name="Schenowitz C."/>
            <person name="Sellstedt A."/>
            <person name="Tavares F."/>
            <person name="Tomkins J.P."/>
            <person name="Vallenet D."/>
            <person name="Valverde C."/>
            <person name="Wall L.G."/>
            <person name="Wang Y."/>
            <person name="Medigue C."/>
            <person name="Benson D.R."/>
        </authorList>
    </citation>
    <scope>NUCLEOTIDE SEQUENCE [LARGE SCALE GENOMIC DNA]</scope>
    <source>
        <strain>EAN1pec</strain>
    </source>
</reference>
<proteinExistence type="inferred from homology"/>
<comment type="function">
    <text evidence="1">Component of the acetyl coenzyme A carboxylase (ACC) complex. Biotin carboxylase (BC) catalyzes the carboxylation of biotin on its carrier protein (BCCP) and then the CO(2) group is transferred by the transcarboxylase to acetyl-CoA to form malonyl-CoA (By similarity).</text>
</comment>
<comment type="catalytic activity">
    <reaction>
        <text>N(6)-carboxybiotinyl-L-lysyl-[protein] + acetyl-CoA = N(6)-biotinyl-L-lysyl-[protein] + malonyl-CoA</text>
        <dbReference type="Rhea" id="RHEA:54728"/>
        <dbReference type="Rhea" id="RHEA-COMP:10505"/>
        <dbReference type="Rhea" id="RHEA-COMP:10506"/>
        <dbReference type="ChEBI" id="CHEBI:57288"/>
        <dbReference type="ChEBI" id="CHEBI:57384"/>
        <dbReference type="ChEBI" id="CHEBI:83144"/>
        <dbReference type="ChEBI" id="CHEBI:83145"/>
        <dbReference type="EC" id="2.1.3.15"/>
    </reaction>
</comment>
<comment type="cofactor">
    <cofactor evidence="1">
        <name>Zn(2+)</name>
        <dbReference type="ChEBI" id="CHEBI:29105"/>
    </cofactor>
    <text evidence="1">Binds 1 zinc ion per subunit.</text>
</comment>
<comment type="pathway">
    <text>Lipid metabolism; malonyl-CoA biosynthesis; malonyl-CoA from acetyl-CoA: step 1/1.</text>
</comment>
<comment type="subunit">
    <text evidence="1">Acetyl-CoA carboxylase is a heterotetramer composed of biotin carboxyl carrier protein (AccB), biotin carboxylase (AccC) and two subunits of ACCase subunit beta/alpha.</text>
</comment>
<comment type="subcellular location">
    <subcellularLocation>
        <location evidence="1">Cytoplasm</location>
    </subcellularLocation>
</comment>
<comment type="similarity">
    <text evidence="6">In the N-terminal section; belongs to the AccD/PCCB family.</text>
</comment>
<comment type="similarity">
    <text evidence="6">In the C-terminal section; belongs to the AccA family.</text>
</comment>
<keyword id="KW-0067">ATP-binding</keyword>
<keyword id="KW-0963">Cytoplasm</keyword>
<keyword id="KW-0275">Fatty acid biosynthesis</keyword>
<keyword id="KW-0276">Fatty acid metabolism</keyword>
<keyword id="KW-0444">Lipid biosynthesis</keyword>
<keyword id="KW-0443">Lipid metabolism</keyword>
<keyword id="KW-0479">Metal-binding</keyword>
<keyword id="KW-0547">Nucleotide-binding</keyword>
<keyword id="KW-0808">Transferase</keyword>
<keyword id="KW-0862">Zinc</keyword>
<keyword id="KW-0863">Zinc-finger</keyword>
<protein>
    <recommendedName>
        <fullName>Acetyl-coenzyme A carboxylase carboxyl transferase subunits beta/alpha</fullName>
        <shortName>ACCase subunits beta/alpha</shortName>
        <shortName>Acetyl-CoA carboxylase carboxyltransferase subunits beta/alpha</shortName>
        <ecNumber>2.1.3.15</ecNumber>
    </recommendedName>
</protein>
<gene>
    <name type="primary">accD</name>
    <name type="synonym">accA</name>
    <name type="synonym">accDA</name>
    <name type="ordered locus">Franean1_3951</name>
</gene>
<dbReference type="EC" id="2.1.3.15"/>
<dbReference type="EMBL" id="CP000820">
    <property type="protein sequence ID" value="ABW13341.1"/>
    <property type="molecule type" value="Genomic_DNA"/>
</dbReference>
<dbReference type="RefSeq" id="WP_020461476.1">
    <property type="nucleotide sequence ID" value="NC_009921.1"/>
</dbReference>
<dbReference type="SMR" id="A8L4H3"/>
<dbReference type="STRING" id="298653.Franean1_3951"/>
<dbReference type="KEGG" id="fre:Franean1_3951"/>
<dbReference type="eggNOG" id="COG0777">
    <property type="taxonomic scope" value="Bacteria"/>
</dbReference>
<dbReference type="eggNOG" id="COG0825">
    <property type="taxonomic scope" value="Bacteria"/>
</dbReference>
<dbReference type="HOGENOM" id="CLU_015486_3_2_11"/>
<dbReference type="UniPathway" id="UPA00655">
    <property type="reaction ID" value="UER00711"/>
</dbReference>
<dbReference type="GO" id="GO:0009317">
    <property type="term" value="C:acetyl-CoA carboxylase complex"/>
    <property type="evidence" value="ECO:0007669"/>
    <property type="project" value="InterPro"/>
</dbReference>
<dbReference type="GO" id="GO:0003989">
    <property type="term" value="F:acetyl-CoA carboxylase activity"/>
    <property type="evidence" value="ECO:0007669"/>
    <property type="project" value="InterPro"/>
</dbReference>
<dbReference type="GO" id="GO:0005524">
    <property type="term" value="F:ATP binding"/>
    <property type="evidence" value="ECO:0007669"/>
    <property type="project" value="UniProtKB-KW"/>
</dbReference>
<dbReference type="GO" id="GO:0016743">
    <property type="term" value="F:carboxyl- or carbamoyltransferase activity"/>
    <property type="evidence" value="ECO:0007669"/>
    <property type="project" value="UniProtKB-UniRule"/>
</dbReference>
<dbReference type="GO" id="GO:0008270">
    <property type="term" value="F:zinc ion binding"/>
    <property type="evidence" value="ECO:0007669"/>
    <property type="project" value="UniProtKB-UniRule"/>
</dbReference>
<dbReference type="GO" id="GO:0006633">
    <property type="term" value="P:fatty acid biosynthetic process"/>
    <property type="evidence" value="ECO:0007669"/>
    <property type="project" value="UniProtKB-KW"/>
</dbReference>
<dbReference type="GO" id="GO:2001295">
    <property type="term" value="P:malonyl-CoA biosynthetic process"/>
    <property type="evidence" value="ECO:0007669"/>
    <property type="project" value="UniProtKB-UniRule"/>
</dbReference>
<dbReference type="Gene3D" id="3.90.226.10">
    <property type="entry name" value="2-enoyl-CoA Hydratase, Chain A, domain 1"/>
    <property type="match status" value="2"/>
</dbReference>
<dbReference type="HAMAP" id="MF_00823">
    <property type="entry name" value="AcetylCoA_CT_alpha"/>
    <property type="match status" value="1"/>
</dbReference>
<dbReference type="HAMAP" id="MF_01395">
    <property type="entry name" value="AcetylCoA_CT_beta"/>
    <property type="match status" value="1"/>
</dbReference>
<dbReference type="InterPro" id="IPR034733">
    <property type="entry name" value="AcCoA_carboxyl_beta"/>
</dbReference>
<dbReference type="InterPro" id="IPR001095">
    <property type="entry name" value="Acetyl_CoA_COase_a_su"/>
</dbReference>
<dbReference type="InterPro" id="IPR000438">
    <property type="entry name" value="Acetyl_CoA_COase_Trfase_b_su"/>
</dbReference>
<dbReference type="InterPro" id="IPR029045">
    <property type="entry name" value="ClpP/crotonase-like_dom_sf"/>
</dbReference>
<dbReference type="InterPro" id="IPR011763">
    <property type="entry name" value="COA_CT_C"/>
</dbReference>
<dbReference type="InterPro" id="IPR011762">
    <property type="entry name" value="COA_CT_N"/>
</dbReference>
<dbReference type="NCBIfam" id="TIGR00513">
    <property type="entry name" value="accA"/>
    <property type="match status" value="1"/>
</dbReference>
<dbReference type="NCBIfam" id="NF041504">
    <property type="entry name" value="AccA_sub"/>
    <property type="match status" value="1"/>
</dbReference>
<dbReference type="NCBIfam" id="TIGR00515">
    <property type="entry name" value="accD"/>
    <property type="match status" value="1"/>
</dbReference>
<dbReference type="PANTHER" id="PTHR42853">
    <property type="entry name" value="ACETYL-COENZYME A CARBOXYLASE CARBOXYL TRANSFERASE SUBUNIT ALPHA"/>
    <property type="match status" value="1"/>
</dbReference>
<dbReference type="PANTHER" id="PTHR42853:SF3">
    <property type="entry name" value="ACETYL-COENZYME A CARBOXYLASE CARBOXYL TRANSFERASE SUBUNIT ALPHA, CHLOROPLASTIC"/>
    <property type="match status" value="1"/>
</dbReference>
<dbReference type="Pfam" id="PF03255">
    <property type="entry name" value="ACCA"/>
    <property type="match status" value="1"/>
</dbReference>
<dbReference type="Pfam" id="PF01039">
    <property type="entry name" value="Carboxyl_trans"/>
    <property type="match status" value="1"/>
</dbReference>
<dbReference type="PRINTS" id="PR01070">
    <property type="entry name" value="ACCCTRFRASEB"/>
</dbReference>
<dbReference type="SUPFAM" id="SSF52096">
    <property type="entry name" value="ClpP/crotonase"/>
    <property type="match status" value="2"/>
</dbReference>
<dbReference type="PROSITE" id="PS50989">
    <property type="entry name" value="COA_CT_CTER"/>
    <property type="match status" value="1"/>
</dbReference>
<dbReference type="PROSITE" id="PS50980">
    <property type="entry name" value="COA_CT_NTER"/>
    <property type="match status" value="1"/>
</dbReference>
<feature type="chain" id="PRO_0000389901" description="Acetyl-coenzyme A carboxylase carboxyl transferase subunits beta/alpha">
    <location>
        <begin position="1"/>
        <end position="614"/>
    </location>
</feature>
<feature type="domain" description="CoA carboxyltransferase N-terminal" evidence="2">
    <location>
        <begin position="18"/>
        <end position="287"/>
    </location>
</feature>
<feature type="domain" description="CoA carboxyltransferase C-terminal" evidence="3">
    <location>
        <begin position="311"/>
        <end position="556"/>
    </location>
</feature>
<feature type="zinc finger region" description="C4-type" evidence="1">
    <location>
        <begin position="22"/>
        <end position="44"/>
    </location>
</feature>
<feature type="region of interest" description="Acetyl-coenzyme A carboxylase carboxyl transferase subunit beta" evidence="1">
    <location>
        <begin position="1"/>
        <end position="250"/>
    </location>
</feature>
<feature type="region of interest" description="Carboxyltransferase" evidence="4">
    <location>
        <begin position="18"/>
        <end position="556"/>
    </location>
</feature>
<feature type="region of interest" description="Acetyl-coenzyme A carboxylase carboxyl transferase subunit alpha" evidence="1">
    <location>
        <begin position="251"/>
        <end position="614"/>
    </location>
</feature>
<feature type="region of interest" description="Disordered" evidence="5">
    <location>
        <begin position="272"/>
        <end position="314"/>
    </location>
</feature>
<feature type="region of interest" description="Disordered" evidence="5">
    <location>
        <begin position="577"/>
        <end position="614"/>
    </location>
</feature>
<feature type="compositionally biased region" description="Gly residues" evidence="5">
    <location>
        <begin position="297"/>
        <end position="307"/>
    </location>
</feature>
<feature type="compositionally biased region" description="Low complexity" evidence="5">
    <location>
        <begin position="579"/>
        <end position="602"/>
    </location>
</feature>
<feature type="compositionally biased region" description="Basic and acidic residues" evidence="5">
    <location>
        <begin position="603"/>
        <end position="614"/>
    </location>
</feature>
<feature type="binding site" evidence="1">
    <location>
        <position position="22"/>
    </location>
    <ligand>
        <name>Zn(2+)</name>
        <dbReference type="ChEBI" id="CHEBI:29105"/>
    </ligand>
</feature>
<feature type="binding site" evidence="1">
    <location>
        <position position="25"/>
    </location>
    <ligand>
        <name>Zn(2+)</name>
        <dbReference type="ChEBI" id="CHEBI:29105"/>
    </ligand>
</feature>
<feature type="binding site" evidence="1">
    <location>
        <position position="41"/>
    </location>
    <ligand>
        <name>Zn(2+)</name>
        <dbReference type="ChEBI" id="CHEBI:29105"/>
    </ligand>
</feature>
<feature type="binding site" evidence="1">
    <location>
        <position position="44"/>
    </location>
    <ligand>
        <name>Zn(2+)</name>
        <dbReference type="ChEBI" id="CHEBI:29105"/>
    </ligand>
</feature>
<name>ACCDA_PARS2</name>